<proteinExistence type="inferred from homology"/>
<evidence type="ECO:0000250" key="1"/>
<evidence type="ECO:0000256" key="2">
    <source>
        <dbReference type="SAM" id="MobiDB-lite"/>
    </source>
</evidence>
<evidence type="ECO:0000305" key="3"/>
<dbReference type="EMBL" id="BX294013">
    <property type="protein sequence ID" value="CAD70807.1"/>
    <property type="status" value="ALT_SEQ"/>
    <property type="molecule type" value="Genomic_DNA"/>
</dbReference>
<dbReference type="EMBL" id="CM002240">
    <property type="protein sequence ID" value="EAA29969.3"/>
    <property type="molecule type" value="Genomic_DNA"/>
</dbReference>
<dbReference type="RefSeq" id="XP_959205.3">
    <property type="nucleotide sequence ID" value="XM_954112.3"/>
</dbReference>
<dbReference type="SMR" id="Q872C6"/>
<dbReference type="STRING" id="367110.Q872C6"/>
<dbReference type="PaxDb" id="5141-EFNCRP00000005833"/>
<dbReference type="EnsemblFungi" id="EAA29969">
    <property type="protein sequence ID" value="EAA29969"/>
    <property type="gene ID" value="NCU04662"/>
</dbReference>
<dbReference type="GeneID" id="3875352"/>
<dbReference type="KEGG" id="ncr:NCU04662"/>
<dbReference type="VEuPathDB" id="FungiDB:NCU04662"/>
<dbReference type="HOGENOM" id="CLU_051894_2_0_1"/>
<dbReference type="InParanoid" id="Q872C6"/>
<dbReference type="OrthoDB" id="272162at2759"/>
<dbReference type="Proteomes" id="UP000001805">
    <property type="component" value="Chromosome 2, Linkage Group V"/>
</dbReference>
<dbReference type="GO" id="GO:0034274">
    <property type="term" value="C:Atg12-Atg5-Atg16 complex"/>
    <property type="evidence" value="ECO:0000318"/>
    <property type="project" value="GO_Central"/>
</dbReference>
<dbReference type="GO" id="GO:0005776">
    <property type="term" value="C:autophagosome"/>
    <property type="evidence" value="ECO:0000318"/>
    <property type="project" value="GO_Central"/>
</dbReference>
<dbReference type="GO" id="GO:0061908">
    <property type="term" value="C:phagophore"/>
    <property type="evidence" value="ECO:0000318"/>
    <property type="project" value="GO_Central"/>
</dbReference>
<dbReference type="GO" id="GO:0034045">
    <property type="term" value="C:phagophore assembly site membrane"/>
    <property type="evidence" value="ECO:0000318"/>
    <property type="project" value="GO_Central"/>
</dbReference>
<dbReference type="GO" id="GO:0035973">
    <property type="term" value="P:aggrephagy"/>
    <property type="evidence" value="ECO:0000318"/>
    <property type="project" value="GO_Central"/>
</dbReference>
<dbReference type="GO" id="GO:0000045">
    <property type="term" value="P:autophagosome assembly"/>
    <property type="evidence" value="ECO:0000318"/>
    <property type="project" value="GO_Central"/>
</dbReference>
<dbReference type="GO" id="GO:0006995">
    <property type="term" value="P:cellular response to nitrogen starvation"/>
    <property type="evidence" value="ECO:0000318"/>
    <property type="project" value="GO_Central"/>
</dbReference>
<dbReference type="GO" id="GO:0000423">
    <property type="term" value="P:mitophagy"/>
    <property type="evidence" value="ECO:0000318"/>
    <property type="project" value="GO_Central"/>
</dbReference>
<dbReference type="GO" id="GO:0034727">
    <property type="term" value="P:piecemeal microautophagy of the nucleus"/>
    <property type="evidence" value="ECO:0000318"/>
    <property type="project" value="GO_Central"/>
</dbReference>
<dbReference type="GO" id="GO:0015031">
    <property type="term" value="P:protein transport"/>
    <property type="evidence" value="ECO:0007669"/>
    <property type="project" value="UniProtKB-KW"/>
</dbReference>
<dbReference type="FunFam" id="1.10.246.190:FF:000004">
    <property type="entry name" value="Autophagy protein 5"/>
    <property type="match status" value="1"/>
</dbReference>
<dbReference type="Gene3D" id="3.10.20.620">
    <property type="match status" value="1"/>
</dbReference>
<dbReference type="Gene3D" id="1.10.246.190">
    <property type="entry name" value="Autophagy protein Apg5, helix rich domain"/>
    <property type="match status" value="1"/>
</dbReference>
<dbReference type="Gene3D" id="3.10.20.90">
    <property type="entry name" value="Phosphatidylinositol 3-kinase Catalytic Subunit, Chain A, domain 1"/>
    <property type="match status" value="1"/>
</dbReference>
<dbReference type="InterPro" id="IPR007239">
    <property type="entry name" value="Atg5"/>
</dbReference>
<dbReference type="InterPro" id="IPR048940">
    <property type="entry name" value="ATG5_HBR"/>
</dbReference>
<dbReference type="InterPro" id="IPR042526">
    <property type="entry name" value="Atg5_HR"/>
</dbReference>
<dbReference type="InterPro" id="IPR048939">
    <property type="entry name" value="ATG5_UblA"/>
</dbReference>
<dbReference type="InterPro" id="IPR042527">
    <property type="entry name" value="Atg5_UblA_dom_sf"/>
</dbReference>
<dbReference type="InterPro" id="IPR048318">
    <property type="entry name" value="ATG5_UblB"/>
</dbReference>
<dbReference type="PANTHER" id="PTHR13040">
    <property type="entry name" value="AUTOPHAGY PROTEIN 5"/>
    <property type="match status" value="1"/>
</dbReference>
<dbReference type="PANTHER" id="PTHR13040:SF2">
    <property type="entry name" value="AUTOPHAGY PROTEIN 5"/>
    <property type="match status" value="1"/>
</dbReference>
<dbReference type="Pfam" id="PF20637">
    <property type="entry name" value="ATG5_HBR"/>
    <property type="match status" value="1"/>
</dbReference>
<dbReference type="Pfam" id="PF20638">
    <property type="entry name" value="ATG5_UblA"/>
    <property type="match status" value="1"/>
</dbReference>
<dbReference type="Pfam" id="PF04106">
    <property type="entry name" value="ATG5_UblB"/>
    <property type="match status" value="1"/>
</dbReference>
<keyword id="KW-0072">Autophagy</keyword>
<keyword id="KW-1017">Isopeptide bond</keyword>
<keyword id="KW-0472">Membrane</keyword>
<keyword id="KW-0653">Protein transport</keyword>
<keyword id="KW-1185">Reference proteome</keyword>
<keyword id="KW-0813">Transport</keyword>
<keyword id="KW-0832">Ubl conjugation</keyword>
<protein>
    <recommendedName>
        <fullName>Autophagy-related protein 5</fullName>
    </recommendedName>
</protein>
<accession>Q872C6</accession>
<accession>Q1K6F8</accession>
<sequence>MASPNPYSYSPQLPQREESPYQEDQYQSSPSFRSTPFRSSRGTGAGTGIGLGLSSGFTSSLRGGAGGPSEPRSGDGSHDDLPQRSSSSSTVIPSLPPKPKPSSIPETLWSLQIPLHITHQSHPKTPYICSVPRFSYLALLLPRLTAYYGTPCSSFHHEEVHLRNFAVGLLVDLYQPSELPWRLTVADGMEWDICDTFMNSAKEADFIRNGNAKRIMGLSKEHTTALWNAVQDNDYQAFTKINTHLLNAPTALKNVPIRIYIPSSPSPPSSDQQQPQRPGGSSSSGSYRVMQTLVPPRGPNNRTPQTLGQALKSLLPALFPSSRDPVLASVILHGAPVPFSAPLEELMRDASYPDGWLCLIVVLL</sequence>
<organism>
    <name type="scientific">Neurospora crassa (strain ATCC 24698 / 74-OR23-1A / CBS 708.71 / DSM 1257 / FGSC 987)</name>
    <dbReference type="NCBI Taxonomy" id="367110"/>
    <lineage>
        <taxon>Eukaryota</taxon>
        <taxon>Fungi</taxon>
        <taxon>Dikarya</taxon>
        <taxon>Ascomycota</taxon>
        <taxon>Pezizomycotina</taxon>
        <taxon>Sordariomycetes</taxon>
        <taxon>Sordariomycetidae</taxon>
        <taxon>Sordariales</taxon>
        <taxon>Sordariaceae</taxon>
        <taxon>Neurospora</taxon>
    </lineage>
</organism>
<reference key="1">
    <citation type="journal article" date="2003" name="Nucleic Acids Res.">
        <title>What's in the genome of a filamentous fungus? Analysis of the Neurospora genome sequence.</title>
        <authorList>
            <person name="Mannhaupt G."/>
            <person name="Montrone C."/>
            <person name="Haase D."/>
            <person name="Mewes H.-W."/>
            <person name="Aign V."/>
            <person name="Hoheisel J.D."/>
            <person name="Fartmann B."/>
            <person name="Nyakatura G."/>
            <person name="Kempken F."/>
            <person name="Maier J."/>
            <person name="Schulte U."/>
        </authorList>
    </citation>
    <scope>NUCLEOTIDE SEQUENCE [LARGE SCALE GENOMIC DNA]</scope>
    <source>
        <strain>ATCC 24698 / 74-OR23-1A / CBS 708.71 / DSM 1257 / FGSC 987</strain>
    </source>
</reference>
<reference key="2">
    <citation type="journal article" date="2003" name="Nature">
        <title>The genome sequence of the filamentous fungus Neurospora crassa.</title>
        <authorList>
            <person name="Galagan J.E."/>
            <person name="Calvo S.E."/>
            <person name="Borkovich K.A."/>
            <person name="Selker E.U."/>
            <person name="Read N.D."/>
            <person name="Jaffe D.B."/>
            <person name="FitzHugh W."/>
            <person name="Ma L.-J."/>
            <person name="Smirnov S."/>
            <person name="Purcell S."/>
            <person name="Rehman B."/>
            <person name="Elkins T."/>
            <person name="Engels R."/>
            <person name="Wang S."/>
            <person name="Nielsen C.B."/>
            <person name="Butler J."/>
            <person name="Endrizzi M."/>
            <person name="Qui D."/>
            <person name="Ianakiev P."/>
            <person name="Bell-Pedersen D."/>
            <person name="Nelson M.A."/>
            <person name="Werner-Washburne M."/>
            <person name="Selitrennikoff C.P."/>
            <person name="Kinsey J.A."/>
            <person name="Braun E.L."/>
            <person name="Zelter A."/>
            <person name="Schulte U."/>
            <person name="Kothe G.O."/>
            <person name="Jedd G."/>
            <person name="Mewes H.-W."/>
            <person name="Staben C."/>
            <person name="Marcotte E."/>
            <person name="Greenberg D."/>
            <person name="Roy A."/>
            <person name="Foley K."/>
            <person name="Naylor J."/>
            <person name="Stange-Thomann N."/>
            <person name="Barrett R."/>
            <person name="Gnerre S."/>
            <person name="Kamal M."/>
            <person name="Kamvysselis M."/>
            <person name="Mauceli E.W."/>
            <person name="Bielke C."/>
            <person name="Rudd S."/>
            <person name="Frishman D."/>
            <person name="Krystofova S."/>
            <person name="Rasmussen C."/>
            <person name="Metzenberg R.L."/>
            <person name="Perkins D.D."/>
            <person name="Kroken S."/>
            <person name="Cogoni C."/>
            <person name="Macino G."/>
            <person name="Catcheside D.E.A."/>
            <person name="Li W."/>
            <person name="Pratt R.J."/>
            <person name="Osmani S.A."/>
            <person name="DeSouza C.P.C."/>
            <person name="Glass N.L."/>
            <person name="Orbach M.J."/>
            <person name="Berglund J.A."/>
            <person name="Voelker R."/>
            <person name="Yarden O."/>
            <person name="Plamann M."/>
            <person name="Seiler S."/>
            <person name="Dunlap J.C."/>
            <person name="Radford A."/>
            <person name="Aramayo R."/>
            <person name="Natvig D.O."/>
            <person name="Alex L.A."/>
            <person name="Mannhaupt G."/>
            <person name="Ebbole D.J."/>
            <person name="Freitag M."/>
            <person name="Paulsen I."/>
            <person name="Sachs M.S."/>
            <person name="Lander E.S."/>
            <person name="Nusbaum C."/>
            <person name="Birren B.W."/>
        </authorList>
    </citation>
    <scope>NUCLEOTIDE SEQUENCE [LARGE SCALE GENOMIC DNA]</scope>
    <source>
        <strain>ATCC 24698 / 74-OR23-1A / CBS 708.71 / DSM 1257 / FGSC 987</strain>
    </source>
</reference>
<name>ATG5_NEUCR</name>
<feature type="chain" id="PRO_0000219007" description="Autophagy-related protein 5">
    <location>
        <begin position="1"/>
        <end position="364"/>
    </location>
</feature>
<feature type="region of interest" description="Disordered" evidence="2">
    <location>
        <begin position="1"/>
        <end position="103"/>
    </location>
</feature>
<feature type="region of interest" description="Disordered" evidence="2">
    <location>
        <begin position="262"/>
        <end position="306"/>
    </location>
</feature>
<feature type="compositionally biased region" description="Polar residues" evidence="2">
    <location>
        <begin position="1"/>
        <end position="13"/>
    </location>
</feature>
<feature type="compositionally biased region" description="Low complexity" evidence="2">
    <location>
        <begin position="28"/>
        <end position="42"/>
    </location>
</feature>
<feature type="compositionally biased region" description="Gly residues" evidence="2">
    <location>
        <begin position="43"/>
        <end position="53"/>
    </location>
</feature>
<feature type="compositionally biased region" description="Basic and acidic residues" evidence="2">
    <location>
        <begin position="72"/>
        <end position="82"/>
    </location>
</feature>
<feature type="compositionally biased region" description="Low complexity" evidence="2">
    <location>
        <begin position="269"/>
        <end position="286"/>
    </location>
</feature>
<feature type="cross-link" description="Glycyl lysine isopeptide (Lys-Gly) (interchain with G-Cter in ATG12)" evidence="1">
    <location>
        <position position="202"/>
    </location>
</feature>
<gene>
    <name type="primary">apg-4</name>
    <name type="synonym">atg5</name>
    <name type="ORF">NCU04662</name>
    <name type="ORF">X4G11.040</name>
</gene>
<comment type="function">
    <text evidence="1">Involved in cytoplasm to vacuole transport (Cvt) and autophagic vesicle formation. Autophagy is essential for maintenance of amino acid levels and protein synthesis under nitrogen starvation. Required for selective autophagic degradation of the nucleus (nucleophagy). Also required for mitophagy, which eliminates defective or superfluous mitochondria in order to fulfill cellular energy requirements and prevent excess ROS production. Conjugation with atg12, through a ubiquitin-like conjugating system involving apg-5/atg7 as an E1-like activating enzyme and atg10 as an E2-like conjugating enzyme, is essential for its function. The atg12-apg-4/atg5 conjugate acts as an E3-like enzyme which is required for lipidation of apg-6/atg8 and apg-6/atg8 association to the vesicle membranes (By similarity).</text>
</comment>
<comment type="subunit">
    <text evidence="1">Conjugated with atg12.</text>
</comment>
<comment type="subcellular location">
    <subcellularLocation>
        <location evidence="1">Preautophagosomal structure membrane</location>
        <topology evidence="1">Peripheral membrane protein</topology>
    </subcellularLocation>
</comment>
<comment type="PTM">
    <text evidence="1">Conjugated to atg12; which is essential for autophagy.</text>
</comment>
<comment type="similarity">
    <text evidence="3">Belongs to the ATG5 family.</text>
</comment>
<comment type="sequence caution" evidence="3">
    <conflict type="erroneous gene model prediction">
        <sequence resource="EMBL-CDS" id="CAD70807"/>
    </conflict>
</comment>